<organism>
    <name type="scientific">Amoebophilus asiaticus (strain 5a2)</name>
    <dbReference type="NCBI Taxonomy" id="452471"/>
    <lineage>
        <taxon>Bacteria</taxon>
        <taxon>Pseudomonadati</taxon>
        <taxon>Bacteroidota</taxon>
        <taxon>Cytophagia</taxon>
        <taxon>Cytophagales</taxon>
        <taxon>Amoebophilaceae</taxon>
        <taxon>Candidatus Amoebophilus</taxon>
    </lineage>
</organism>
<comment type="function">
    <text evidence="1">Could be a nuclease involved in processing of the 5'-end of pre-16S rRNA.</text>
</comment>
<comment type="subcellular location">
    <subcellularLocation>
        <location evidence="1">Cytoplasm</location>
    </subcellularLocation>
</comment>
<comment type="similarity">
    <text evidence="1">Belongs to the YqgF nuclease family.</text>
</comment>
<evidence type="ECO:0000255" key="1">
    <source>
        <dbReference type="HAMAP-Rule" id="MF_00651"/>
    </source>
</evidence>
<keyword id="KW-0963">Cytoplasm</keyword>
<keyword id="KW-0378">Hydrolase</keyword>
<keyword id="KW-0540">Nuclease</keyword>
<keyword id="KW-1185">Reference proteome</keyword>
<keyword id="KW-0690">Ribosome biogenesis</keyword>
<accession>B3ETT5</accession>
<protein>
    <recommendedName>
        <fullName evidence="1">Putative pre-16S rRNA nuclease</fullName>
        <ecNumber evidence="1">3.1.-.-</ecNumber>
    </recommendedName>
</protein>
<reference key="1">
    <citation type="journal article" date="2010" name="J. Bacteriol.">
        <title>The genome of the amoeba symbiont 'Candidatus Amoebophilus asiaticus' reveals common mechanisms for host cell interaction among amoeba-associated bacteria.</title>
        <authorList>
            <person name="Schmitz-Esser S."/>
            <person name="Tischler P."/>
            <person name="Arnold R."/>
            <person name="Montanaro J."/>
            <person name="Wagner M."/>
            <person name="Rattei T."/>
            <person name="Horn M."/>
        </authorList>
    </citation>
    <scope>NUCLEOTIDE SEQUENCE [LARGE SCALE GENOMIC DNA]</scope>
    <source>
        <strain>5a2</strain>
    </source>
</reference>
<gene>
    <name type="ordered locus">Aasi_1327</name>
</gene>
<proteinExistence type="inferred from homology"/>
<dbReference type="EC" id="3.1.-.-" evidence="1"/>
<dbReference type="EMBL" id="CP001102">
    <property type="protein sequence ID" value="ACE06637.1"/>
    <property type="molecule type" value="Genomic_DNA"/>
</dbReference>
<dbReference type="RefSeq" id="WP_012473381.1">
    <property type="nucleotide sequence ID" value="NC_010830.1"/>
</dbReference>
<dbReference type="SMR" id="B3ETT5"/>
<dbReference type="STRING" id="452471.Aasi_1327"/>
<dbReference type="KEGG" id="aas:Aasi_1327"/>
<dbReference type="eggNOG" id="COG0816">
    <property type="taxonomic scope" value="Bacteria"/>
</dbReference>
<dbReference type="HOGENOM" id="CLU_098240_2_1_10"/>
<dbReference type="OrthoDB" id="9796140at2"/>
<dbReference type="Proteomes" id="UP000001227">
    <property type="component" value="Chromosome"/>
</dbReference>
<dbReference type="GO" id="GO:0005829">
    <property type="term" value="C:cytosol"/>
    <property type="evidence" value="ECO:0007669"/>
    <property type="project" value="TreeGrafter"/>
</dbReference>
<dbReference type="GO" id="GO:0004518">
    <property type="term" value="F:nuclease activity"/>
    <property type="evidence" value="ECO:0007669"/>
    <property type="project" value="UniProtKB-KW"/>
</dbReference>
<dbReference type="GO" id="GO:0000967">
    <property type="term" value="P:rRNA 5'-end processing"/>
    <property type="evidence" value="ECO:0007669"/>
    <property type="project" value="UniProtKB-UniRule"/>
</dbReference>
<dbReference type="CDD" id="cd16964">
    <property type="entry name" value="YqgF"/>
    <property type="match status" value="1"/>
</dbReference>
<dbReference type="Gene3D" id="3.30.420.140">
    <property type="entry name" value="YqgF/RNase H-like domain"/>
    <property type="match status" value="1"/>
</dbReference>
<dbReference type="HAMAP" id="MF_00651">
    <property type="entry name" value="Nuclease_YqgF"/>
    <property type="match status" value="1"/>
</dbReference>
<dbReference type="InterPro" id="IPR012337">
    <property type="entry name" value="RNaseH-like_sf"/>
</dbReference>
<dbReference type="InterPro" id="IPR005227">
    <property type="entry name" value="YqgF"/>
</dbReference>
<dbReference type="InterPro" id="IPR006641">
    <property type="entry name" value="YqgF/RNaseH-like_dom"/>
</dbReference>
<dbReference type="InterPro" id="IPR037027">
    <property type="entry name" value="YqgF/RNaseH-like_dom_sf"/>
</dbReference>
<dbReference type="NCBIfam" id="TIGR00250">
    <property type="entry name" value="RNAse_H_YqgF"/>
    <property type="match status" value="1"/>
</dbReference>
<dbReference type="PANTHER" id="PTHR33317">
    <property type="entry name" value="POLYNUCLEOTIDYL TRANSFERASE, RIBONUCLEASE H-LIKE SUPERFAMILY PROTEIN"/>
    <property type="match status" value="1"/>
</dbReference>
<dbReference type="PANTHER" id="PTHR33317:SF4">
    <property type="entry name" value="POLYNUCLEOTIDYL TRANSFERASE, RIBONUCLEASE H-LIKE SUPERFAMILY PROTEIN"/>
    <property type="match status" value="1"/>
</dbReference>
<dbReference type="Pfam" id="PF03652">
    <property type="entry name" value="RuvX"/>
    <property type="match status" value="1"/>
</dbReference>
<dbReference type="SMART" id="SM00732">
    <property type="entry name" value="YqgFc"/>
    <property type="match status" value="1"/>
</dbReference>
<dbReference type="SUPFAM" id="SSF53098">
    <property type="entry name" value="Ribonuclease H-like"/>
    <property type="match status" value="1"/>
</dbReference>
<name>YQGF_AMOA5</name>
<sequence>MGRIMAIDYGLKRVGLSVTDPLQIIASPLTTVAANDTLTFLQTYVKKENVEAFVVGYPTDIKDKNTPIIVAISQFIELLQRNFPDQQIFQHDERYTSKLAAASLVEGGFKKKDRRNKENLDKLSATIILQSFLSSYKRHYI</sequence>
<feature type="chain" id="PRO_1000130992" description="Putative pre-16S rRNA nuclease">
    <location>
        <begin position="1"/>
        <end position="141"/>
    </location>
</feature>